<proteinExistence type="inferred from homology"/>
<dbReference type="EMBL" id="CP001140">
    <property type="protein sequence ID" value="ACL11695.1"/>
    <property type="molecule type" value="Genomic_DNA"/>
</dbReference>
<dbReference type="RefSeq" id="WP_012609036.1">
    <property type="nucleotide sequence ID" value="NC_011766.1"/>
</dbReference>
<dbReference type="SMR" id="B8D6G4"/>
<dbReference type="STRING" id="490899.DKAM_1369"/>
<dbReference type="GeneID" id="7171411"/>
<dbReference type="KEGG" id="dka:DKAM_1369"/>
<dbReference type="eggNOG" id="arCOG04254">
    <property type="taxonomic scope" value="Archaea"/>
</dbReference>
<dbReference type="HOGENOM" id="CLU_063975_0_0_2"/>
<dbReference type="Proteomes" id="UP000006903">
    <property type="component" value="Chromosome"/>
</dbReference>
<dbReference type="GO" id="GO:0015935">
    <property type="term" value="C:small ribosomal subunit"/>
    <property type="evidence" value="ECO:0007669"/>
    <property type="project" value="InterPro"/>
</dbReference>
<dbReference type="GO" id="GO:0019843">
    <property type="term" value="F:rRNA binding"/>
    <property type="evidence" value="ECO:0007669"/>
    <property type="project" value="UniProtKB-UniRule"/>
</dbReference>
<dbReference type="GO" id="GO:0003735">
    <property type="term" value="F:structural constituent of ribosome"/>
    <property type="evidence" value="ECO:0007669"/>
    <property type="project" value="InterPro"/>
</dbReference>
<dbReference type="GO" id="GO:0006412">
    <property type="term" value="P:translation"/>
    <property type="evidence" value="ECO:0007669"/>
    <property type="project" value="UniProtKB-UniRule"/>
</dbReference>
<dbReference type="CDD" id="cd14867">
    <property type="entry name" value="uS7_Eukaryote"/>
    <property type="match status" value="1"/>
</dbReference>
<dbReference type="Gene3D" id="1.10.455.10">
    <property type="entry name" value="Ribosomal protein S7 domain"/>
    <property type="match status" value="1"/>
</dbReference>
<dbReference type="HAMAP" id="MF_00480_A">
    <property type="entry name" value="Ribosomal_uS7_A"/>
    <property type="match status" value="1"/>
</dbReference>
<dbReference type="InterPro" id="IPR000235">
    <property type="entry name" value="Ribosomal_uS7"/>
</dbReference>
<dbReference type="InterPro" id="IPR026018">
    <property type="entry name" value="Ribosomal_uS7_arc"/>
</dbReference>
<dbReference type="InterPro" id="IPR020606">
    <property type="entry name" value="Ribosomal_uS7_CS"/>
</dbReference>
<dbReference type="InterPro" id="IPR023798">
    <property type="entry name" value="Ribosomal_uS7_dom"/>
</dbReference>
<dbReference type="InterPro" id="IPR036823">
    <property type="entry name" value="Ribosomal_uS7_dom_sf"/>
</dbReference>
<dbReference type="InterPro" id="IPR005716">
    <property type="entry name" value="Ribosomal_uS7_euk/arc"/>
</dbReference>
<dbReference type="NCBIfam" id="NF003106">
    <property type="entry name" value="PRK04027.1"/>
    <property type="match status" value="1"/>
</dbReference>
<dbReference type="NCBIfam" id="TIGR01028">
    <property type="entry name" value="uS7_euk_arch"/>
    <property type="match status" value="1"/>
</dbReference>
<dbReference type="PANTHER" id="PTHR11205">
    <property type="entry name" value="RIBOSOMAL PROTEIN S7"/>
    <property type="match status" value="1"/>
</dbReference>
<dbReference type="Pfam" id="PF00177">
    <property type="entry name" value="Ribosomal_S7"/>
    <property type="match status" value="1"/>
</dbReference>
<dbReference type="PIRSF" id="PIRSF002122">
    <property type="entry name" value="RPS7p_RPS7a_RPS5e_RPS7o"/>
    <property type="match status" value="1"/>
</dbReference>
<dbReference type="SUPFAM" id="SSF47973">
    <property type="entry name" value="Ribosomal protein S7"/>
    <property type="match status" value="1"/>
</dbReference>
<dbReference type="PROSITE" id="PS00052">
    <property type="entry name" value="RIBOSOMAL_S7"/>
    <property type="match status" value="1"/>
</dbReference>
<comment type="function">
    <text evidence="1">One of the primary rRNA binding proteins, it binds directly to 16S rRNA where it nucleates assembly of the head domain of the 30S subunit. Is located at the subunit interface close to the decoding center.</text>
</comment>
<comment type="subunit">
    <text evidence="1">Part of the 30S ribosomal subunit.</text>
</comment>
<comment type="similarity">
    <text evidence="1">Belongs to the universal ribosomal protein uS7 family.</text>
</comment>
<gene>
    <name evidence="1" type="primary">rps7</name>
    <name type="ordered locus">DKAM_1369</name>
</gene>
<organism>
    <name type="scientific">Desulfurococcus amylolyticus (strain DSM 18924 / JCM 16383 / VKM B-2413 / 1221n)</name>
    <name type="common">Desulfurococcus kamchatkensis</name>
    <dbReference type="NCBI Taxonomy" id="490899"/>
    <lineage>
        <taxon>Archaea</taxon>
        <taxon>Thermoproteota</taxon>
        <taxon>Thermoprotei</taxon>
        <taxon>Desulfurococcales</taxon>
        <taxon>Desulfurococcaceae</taxon>
        <taxon>Desulfurococcus</taxon>
    </lineage>
</organism>
<name>RS7_DESA1</name>
<accession>B8D6G4</accession>
<protein>
    <recommendedName>
        <fullName evidence="1">Small ribosomal subunit protein uS7</fullName>
    </recommendedName>
    <alternativeName>
        <fullName evidence="2">30S ribosomal protein S7</fullName>
    </alternativeName>
</protein>
<evidence type="ECO:0000255" key="1">
    <source>
        <dbReference type="HAMAP-Rule" id="MF_00480"/>
    </source>
</evidence>
<evidence type="ECO:0000305" key="2"/>
<reference key="1">
    <citation type="journal article" date="2009" name="J. Bacteriol.">
        <title>Complete genome sequence of the anaerobic, protein-degrading hyperthermophilic crenarchaeon Desulfurococcus kamchatkensis.</title>
        <authorList>
            <person name="Ravin N.V."/>
            <person name="Mardanov A.V."/>
            <person name="Beletsky A.V."/>
            <person name="Kublanov I.V."/>
            <person name="Kolganova T.V."/>
            <person name="Lebedinsky A.V."/>
            <person name="Chernyh N.A."/>
            <person name="Bonch-Osmolovskaya E.A."/>
            <person name="Skryabin K.G."/>
        </authorList>
    </citation>
    <scope>NUCLEOTIDE SEQUENCE [LARGE SCALE GENOMIC DNA]</scope>
    <source>
        <strain>DSM 18924 / JCM 16383 / VKM B-2413 / 1221n</strain>
    </source>
</reference>
<sequence>MSEMQTREMLIGEIKLFNKWSYDFIEVRDPSLKKYICLKPVYLPHSGGRHEHKRFGKALVPIVERLINNVMRPGRNMGKKHLAYNIVKKSFELIYLKTGENPLQVLVRAIENAAPREETTRIMYGGITYHVSVDIAPLRRIDLALRHLTEGARLKAFHNPISIEEALAEEIALAASNDPKSYAVQKKEEIERIALSSR</sequence>
<feature type="chain" id="PRO_1000135600" description="Small ribosomal subunit protein uS7">
    <location>
        <begin position="1"/>
        <end position="198"/>
    </location>
</feature>
<keyword id="KW-0687">Ribonucleoprotein</keyword>
<keyword id="KW-0689">Ribosomal protein</keyword>
<keyword id="KW-0694">RNA-binding</keyword>
<keyword id="KW-0699">rRNA-binding</keyword>